<accession>Q88NK2</accession>
<reference key="1">
    <citation type="journal article" date="2002" name="Environ. Microbiol.">
        <title>Complete genome sequence and comparative analysis of the metabolically versatile Pseudomonas putida KT2440.</title>
        <authorList>
            <person name="Nelson K.E."/>
            <person name="Weinel C."/>
            <person name="Paulsen I.T."/>
            <person name="Dodson R.J."/>
            <person name="Hilbert H."/>
            <person name="Martins dos Santos V.A.P."/>
            <person name="Fouts D.E."/>
            <person name="Gill S.R."/>
            <person name="Pop M."/>
            <person name="Holmes M."/>
            <person name="Brinkac L.M."/>
            <person name="Beanan M.J."/>
            <person name="DeBoy R.T."/>
            <person name="Daugherty S.C."/>
            <person name="Kolonay J.F."/>
            <person name="Madupu R."/>
            <person name="Nelson W.C."/>
            <person name="White O."/>
            <person name="Peterson J.D."/>
            <person name="Khouri H.M."/>
            <person name="Hance I."/>
            <person name="Chris Lee P."/>
            <person name="Holtzapple E.K."/>
            <person name="Scanlan D."/>
            <person name="Tran K."/>
            <person name="Moazzez A."/>
            <person name="Utterback T.R."/>
            <person name="Rizzo M."/>
            <person name="Lee K."/>
            <person name="Kosack D."/>
            <person name="Moestl D."/>
            <person name="Wedler H."/>
            <person name="Lauber J."/>
            <person name="Stjepandic D."/>
            <person name="Hoheisel J."/>
            <person name="Straetz M."/>
            <person name="Heim S."/>
            <person name="Kiewitz C."/>
            <person name="Eisen J.A."/>
            <person name="Timmis K.N."/>
            <person name="Duesterhoeft A."/>
            <person name="Tuemmler B."/>
            <person name="Fraser C.M."/>
        </authorList>
    </citation>
    <scope>NUCLEOTIDE SEQUENCE [LARGE SCALE GENOMIC DNA]</scope>
    <source>
        <strain>ATCC 47054 / DSM 6125 / CFBP 8728 / NCIMB 11950 / KT2440</strain>
    </source>
</reference>
<keyword id="KW-0030">Aminoacyl-tRNA synthetase</keyword>
<keyword id="KW-0067">ATP-binding</keyword>
<keyword id="KW-0963">Cytoplasm</keyword>
<keyword id="KW-0436">Ligase</keyword>
<keyword id="KW-0547">Nucleotide-binding</keyword>
<keyword id="KW-0648">Protein biosynthesis</keyword>
<keyword id="KW-1185">Reference proteome</keyword>
<proteinExistence type="inferred from homology"/>
<organism>
    <name type="scientific">Pseudomonas putida (strain ATCC 47054 / DSM 6125 / CFBP 8728 / NCIMB 11950 / KT2440)</name>
    <dbReference type="NCBI Taxonomy" id="160488"/>
    <lineage>
        <taxon>Bacteria</taxon>
        <taxon>Pseudomonadati</taxon>
        <taxon>Pseudomonadota</taxon>
        <taxon>Gammaproteobacteria</taxon>
        <taxon>Pseudomonadales</taxon>
        <taxon>Pseudomonadaceae</taxon>
        <taxon>Pseudomonas</taxon>
    </lineage>
</organism>
<gene>
    <name evidence="1" type="primary">proS</name>
    <name type="ordered locus">PP_1205</name>
</gene>
<feature type="chain" id="PRO_0000248747" description="Proline--tRNA ligase">
    <location>
        <begin position="1"/>
        <end position="571"/>
    </location>
</feature>
<evidence type="ECO:0000255" key="1">
    <source>
        <dbReference type="HAMAP-Rule" id="MF_01569"/>
    </source>
</evidence>
<comment type="function">
    <text evidence="1">Catalyzes the attachment of proline to tRNA(Pro) in a two-step reaction: proline is first activated by ATP to form Pro-AMP and then transferred to the acceptor end of tRNA(Pro). As ProRS can inadvertently accommodate and process non-cognate amino acids such as alanine and cysteine, to avoid such errors it has two additional distinct editing activities against alanine. One activity is designated as 'pretransfer' editing and involves the tRNA(Pro)-independent hydrolysis of activated Ala-AMP. The other activity is designated 'posttransfer' editing and involves deacylation of mischarged Ala-tRNA(Pro). The misacylated Cys-tRNA(Pro) is not edited by ProRS.</text>
</comment>
<comment type="catalytic activity">
    <reaction evidence="1">
        <text>tRNA(Pro) + L-proline + ATP = L-prolyl-tRNA(Pro) + AMP + diphosphate</text>
        <dbReference type="Rhea" id="RHEA:14305"/>
        <dbReference type="Rhea" id="RHEA-COMP:9700"/>
        <dbReference type="Rhea" id="RHEA-COMP:9702"/>
        <dbReference type="ChEBI" id="CHEBI:30616"/>
        <dbReference type="ChEBI" id="CHEBI:33019"/>
        <dbReference type="ChEBI" id="CHEBI:60039"/>
        <dbReference type="ChEBI" id="CHEBI:78442"/>
        <dbReference type="ChEBI" id="CHEBI:78532"/>
        <dbReference type="ChEBI" id="CHEBI:456215"/>
        <dbReference type="EC" id="6.1.1.15"/>
    </reaction>
</comment>
<comment type="subunit">
    <text evidence="1">Homodimer.</text>
</comment>
<comment type="subcellular location">
    <subcellularLocation>
        <location evidence="1">Cytoplasm</location>
    </subcellularLocation>
</comment>
<comment type="domain">
    <text evidence="1">Consists of three domains: the N-terminal catalytic domain, the editing domain and the C-terminal anticodon-binding domain.</text>
</comment>
<comment type="similarity">
    <text evidence="1">Belongs to the class-II aminoacyl-tRNA synthetase family. ProS type 1 subfamily.</text>
</comment>
<name>SYP_PSEPK</name>
<protein>
    <recommendedName>
        <fullName evidence="1">Proline--tRNA ligase</fullName>
        <ecNumber evidence="1">6.1.1.15</ecNumber>
    </recommendedName>
    <alternativeName>
        <fullName evidence="1">Prolyl-tRNA synthetase</fullName>
        <shortName evidence="1">ProRS</shortName>
    </alternativeName>
</protein>
<sequence>MRTSQYLLATQKETPADAVVISHQLMLRAGMIRKLASGLYTWLPMGLRVMRKVEAVVREEMNAAGALEVLMPSIQPAELWQESGRWEQYGPELLRLKDRHQRDFCVGPTHEEVITDLARNELSSYKQLPLNLYQIQTKFRDEIRPRFGLMRGREFIMKDAYSFHADQASLQETYDRMHQAYSNVFTRLGLDFRPVQADTGSIGGSYSHEFHVLAESGEDDVIFSDSSDYAANIEKAEAIPRETVRPAPTEELRLVDTPNAKTIAQLVENHGLPIEKTVKTLIVRGAEEGKLIALIVRGDHELNEIKATKLEQVADPLVMATEAELRDAIGAGAGSLGPLNLPLEIIIDRSVALMSDFGIGANIDDKHYFGVNWERDLPVPQVADLRNVVEGDPSPDGQGTLVIKRGIEVGHIFQLGTKYSEALKCQVLGENGKPVVLSMGCYGIGVSRVVAAAIEQSYDDKGIIWNDALAPFQIALVPLRYETDVVREATDKLYAELTAAGYEVLLDDRDKKTSPGIKFADMELIGIPHRIVVSDRGLAEGNLEYKHRTEQDAQALPLNEVLTFLQARVRR</sequence>
<dbReference type="EC" id="6.1.1.15" evidence="1"/>
<dbReference type="EMBL" id="AE015451">
    <property type="protein sequence ID" value="AAN66829.1"/>
    <property type="molecule type" value="Genomic_DNA"/>
</dbReference>
<dbReference type="RefSeq" id="NP_743365.1">
    <property type="nucleotide sequence ID" value="NC_002947.4"/>
</dbReference>
<dbReference type="RefSeq" id="WP_010952358.1">
    <property type="nucleotide sequence ID" value="NZ_CP169744.1"/>
</dbReference>
<dbReference type="SMR" id="Q88NK2"/>
<dbReference type="STRING" id="160488.PP_1205"/>
<dbReference type="PaxDb" id="160488-PP_1205"/>
<dbReference type="KEGG" id="ppu:PP_1205"/>
<dbReference type="PATRIC" id="fig|160488.4.peg.1280"/>
<dbReference type="eggNOG" id="COG0442">
    <property type="taxonomic scope" value="Bacteria"/>
</dbReference>
<dbReference type="HOGENOM" id="CLU_016739_0_0_6"/>
<dbReference type="OrthoDB" id="9809052at2"/>
<dbReference type="PhylomeDB" id="Q88NK2"/>
<dbReference type="BioCyc" id="PPUT160488:G1G01-1290-MONOMER"/>
<dbReference type="Proteomes" id="UP000000556">
    <property type="component" value="Chromosome"/>
</dbReference>
<dbReference type="GO" id="GO:0005829">
    <property type="term" value="C:cytosol"/>
    <property type="evidence" value="ECO:0007669"/>
    <property type="project" value="TreeGrafter"/>
</dbReference>
<dbReference type="GO" id="GO:0002161">
    <property type="term" value="F:aminoacyl-tRNA deacylase activity"/>
    <property type="evidence" value="ECO:0007669"/>
    <property type="project" value="InterPro"/>
</dbReference>
<dbReference type="GO" id="GO:0005524">
    <property type="term" value="F:ATP binding"/>
    <property type="evidence" value="ECO:0007669"/>
    <property type="project" value="UniProtKB-UniRule"/>
</dbReference>
<dbReference type="GO" id="GO:0004827">
    <property type="term" value="F:proline-tRNA ligase activity"/>
    <property type="evidence" value="ECO:0007669"/>
    <property type="project" value="UniProtKB-UniRule"/>
</dbReference>
<dbReference type="GO" id="GO:0006433">
    <property type="term" value="P:prolyl-tRNA aminoacylation"/>
    <property type="evidence" value="ECO:0007669"/>
    <property type="project" value="UniProtKB-UniRule"/>
</dbReference>
<dbReference type="CDD" id="cd04334">
    <property type="entry name" value="ProRS-INS"/>
    <property type="match status" value="1"/>
</dbReference>
<dbReference type="CDD" id="cd00861">
    <property type="entry name" value="ProRS_anticodon_short"/>
    <property type="match status" value="1"/>
</dbReference>
<dbReference type="CDD" id="cd00779">
    <property type="entry name" value="ProRS_core_prok"/>
    <property type="match status" value="1"/>
</dbReference>
<dbReference type="FunFam" id="3.30.930.10:FF:000043">
    <property type="entry name" value="Proline--tRNA ligase"/>
    <property type="match status" value="1"/>
</dbReference>
<dbReference type="FunFam" id="3.30.930.10:FF:000097">
    <property type="entry name" value="Proline--tRNA ligase"/>
    <property type="match status" value="1"/>
</dbReference>
<dbReference type="FunFam" id="3.90.960.10:FF:000001">
    <property type="entry name" value="Proline--tRNA ligase"/>
    <property type="match status" value="1"/>
</dbReference>
<dbReference type="Gene3D" id="3.40.50.800">
    <property type="entry name" value="Anticodon-binding domain"/>
    <property type="match status" value="1"/>
</dbReference>
<dbReference type="Gene3D" id="3.30.930.10">
    <property type="entry name" value="Bira Bifunctional Protein, Domain 2"/>
    <property type="match status" value="2"/>
</dbReference>
<dbReference type="HAMAP" id="MF_01569">
    <property type="entry name" value="Pro_tRNA_synth_type1"/>
    <property type="match status" value="1"/>
</dbReference>
<dbReference type="InterPro" id="IPR002314">
    <property type="entry name" value="aa-tRNA-synt_IIb"/>
</dbReference>
<dbReference type="InterPro" id="IPR006195">
    <property type="entry name" value="aa-tRNA-synth_II"/>
</dbReference>
<dbReference type="InterPro" id="IPR045864">
    <property type="entry name" value="aa-tRNA-synth_II/BPL/LPL"/>
</dbReference>
<dbReference type="InterPro" id="IPR004154">
    <property type="entry name" value="Anticodon-bd"/>
</dbReference>
<dbReference type="InterPro" id="IPR036621">
    <property type="entry name" value="Anticodon-bd_dom_sf"/>
</dbReference>
<dbReference type="InterPro" id="IPR002316">
    <property type="entry name" value="Pro-tRNA-ligase_IIa"/>
</dbReference>
<dbReference type="InterPro" id="IPR004500">
    <property type="entry name" value="Pro-tRNA-synth_IIa_bac-type"/>
</dbReference>
<dbReference type="InterPro" id="IPR023717">
    <property type="entry name" value="Pro-tRNA-Synthase_IIa_type1"/>
</dbReference>
<dbReference type="InterPro" id="IPR050062">
    <property type="entry name" value="Pro-tRNA_synthetase"/>
</dbReference>
<dbReference type="InterPro" id="IPR044140">
    <property type="entry name" value="ProRS_anticodon_short"/>
</dbReference>
<dbReference type="InterPro" id="IPR033730">
    <property type="entry name" value="ProRS_core_prok"/>
</dbReference>
<dbReference type="InterPro" id="IPR036754">
    <property type="entry name" value="YbaK/aa-tRNA-synt-asso_dom_sf"/>
</dbReference>
<dbReference type="InterPro" id="IPR007214">
    <property type="entry name" value="YbaK/aa-tRNA-synth-assoc-dom"/>
</dbReference>
<dbReference type="NCBIfam" id="NF006625">
    <property type="entry name" value="PRK09194.1"/>
    <property type="match status" value="1"/>
</dbReference>
<dbReference type="NCBIfam" id="TIGR00409">
    <property type="entry name" value="proS_fam_II"/>
    <property type="match status" value="1"/>
</dbReference>
<dbReference type="PANTHER" id="PTHR42753">
    <property type="entry name" value="MITOCHONDRIAL RIBOSOME PROTEIN L39/PROLYL-TRNA LIGASE FAMILY MEMBER"/>
    <property type="match status" value="1"/>
</dbReference>
<dbReference type="PANTHER" id="PTHR42753:SF2">
    <property type="entry name" value="PROLINE--TRNA LIGASE"/>
    <property type="match status" value="1"/>
</dbReference>
<dbReference type="Pfam" id="PF03129">
    <property type="entry name" value="HGTP_anticodon"/>
    <property type="match status" value="1"/>
</dbReference>
<dbReference type="Pfam" id="PF00587">
    <property type="entry name" value="tRNA-synt_2b"/>
    <property type="match status" value="1"/>
</dbReference>
<dbReference type="Pfam" id="PF04073">
    <property type="entry name" value="tRNA_edit"/>
    <property type="match status" value="1"/>
</dbReference>
<dbReference type="PIRSF" id="PIRSF001535">
    <property type="entry name" value="ProRS_1"/>
    <property type="match status" value="1"/>
</dbReference>
<dbReference type="PRINTS" id="PR01046">
    <property type="entry name" value="TRNASYNTHPRO"/>
</dbReference>
<dbReference type="SUPFAM" id="SSF52954">
    <property type="entry name" value="Class II aaRS ABD-related"/>
    <property type="match status" value="1"/>
</dbReference>
<dbReference type="SUPFAM" id="SSF55681">
    <property type="entry name" value="Class II aaRS and biotin synthetases"/>
    <property type="match status" value="1"/>
</dbReference>
<dbReference type="SUPFAM" id="SSF55826">
    <property type="entry name" value="YbaK/ProRS associated domain"/>
    <property type="match status" value="1"/>
</dbReference>
<dbReference type="PROSITE" id="PS50862">
    <property type="entry name" value="AA_TRNA_LIGASE_II"/>
    <property type="match status" value="1"/>
</dbReference>